<feature type="chain" id="PRO_1000011546" description="4-hydroxy-3-methylbut-2-en-1-yl diphosphate synthase (flavodoxin)">
    <location>
        <begin position="1"/>
        <end position="375"/>
    </location>
</feature>
<feature type="binding site" evidence="1">
    <location>
        <position position="270"/>
    </location>
    <ligand>
        <name>[4Fe-4S] cluster</name>
        <dbReference type="ChEBI" id="CHEBI:49883"/>
    </ligand>
</feature>
<feature type="binding site" evidence="1">
    <location>
        <position position="273"/>
    </location>
    <ligand>
        <name>[4Fe-4S] cluster</name>
        <dbReference type="ChEBI" id="CHEBI:49883"/>
    </ligand>
</feature>
<feature type="binding site" evidence="1">
    <location>
        <position position="305"/>
    </location>
    <ligand>
        <name>[4Fe-4S] cluster</name>
        <dbReference type="ChEBI" id="CHEBI:49883"/>
    </ligand>
</feature>
<feature type="binding site" evidence="1">
    <location>
        <position position="312"/>
    </location>
    <ligand>
        <name>[4Fe-4S] cluster</name>
        <dbReference type="ChEBI" id="CHEBI:49883"/>
    </ligand>
</feature>
<gene>
    <name evidence="1" type="primary">ispG</name>
    <name type="ordered locus">YPA_2319</name>
</gene>
<evidence type="ECO:0000255" key="1">
    <source>
        <dbReference type="HAMAP-Rule" id="MF_00159"/>
    </source>
</evidence>
<protein>
    <recommendedName>
        <fullName evidence="1">4-hydroxy-3-methylbut-2-en-1-yl diphosphate synthase (flavodoxin)</fullName>
        <ecNumber evidence="1">1.17.7.3</ecNumber>
    </recommendedName>
    <alternativeName>
        <fullName evidence="1">1-hydroxy-2-methyl-2-(E)-butenyl 4-diphosphate synthase</fullName>
    </alternativeName>
</protein>
<keyword id="KW-0004">4Fe-4S</keyword>
<keyword id="KW-0408">Iron</keyword>
<keyword id="KW-0411">Iron-sulfur</keyword>
<keyword id="KW-0414">Isoprene biosynthesis</keyword>
<keyword id="KW-0479">Metal-binding</keyword>
<keyword id="KW-0560">Oxidoreductase</keyword>
<reference key="1">
    <citation type="journal article" date="2006" name="J. Bacteriol.">
        <title>Complete genome sequence of Yersinia pestis strains Antiqua and Nepal516: evidence of gene reduction in an emerging pathogen.</title>
        <authorList>
            <person name="Chain P.S.G."/>
            <person name="Hu P."/>
            <person name="Malfatti S.A."/>
            <person name="Radnedge L."/>
            <person name="Larimer F."/>
            <person name="Vergez L.M."/>
            <person name="Worsham P."/>
            <person name="Chu M.C."/>
            <person name="Andersen G.L."/>
        </authorList>
    </citation>
    <scope>NUCLEOTIDE SEQUENCE [LARGE SCALE GENOMIC DNA]</scope>
    <source>
        <strain>Antiqua</strain>
    </source>
</reference>
<sequence>MHNGSPIIRRKSTRIYVGKVPIGDGAPIAVQSMTNTKTTDVDATVAQIKALERVGVDIVRVSIPTMDAAEAFKLIKQQSTVPLVADIHFDYRIALKVAEYGVDCLRINPGNIGNESRIREVVACARDYNIPIRIGINGGSLEKDIQEKYGEPTPEALLESAMRHVDILDRLNFDQFKVSVKASDVFLAVNSYRLLAKQINNPLHLGITEAGGARSGSVKSAIGLGLLLSEGIGDTLRISLAADPVEEVKVGFDILKSLRIRARGINFIACPTCSRQEFDVIGTVNALEQRLEDLITPMDVSIIGCVVNGPGEALVSTIGVTGARNHSGFYEDGVRQKERFDNKAMIDQLEAKIRAKASILDANNRIVINQLDDNK</sequence>
<comment type="function">
    <text evidence="1">Converts 2C-methyl-D-erythritol 2,4-cyclodiphosphate (ME-2,4cPP) into 1-hydroxy-2-methyl-2-(E)-butenyl 4-diphosphate.</text>
</comment>
<comment type="catalytic activity">
    <reaction evidence="1">
        <text>(2E)-4-hydroxy-3-methylbut-2-enyl diphosphate + oxidized [flavodoxin] + H2O + 2 H(+) = 2-C-methyl-D-erythritol 2,4-cyclic diphosphate + reduced [flavodoxin]</text>
        <dbReference type="Rhea" id="RHEA:43604"/>
        <dbReference type="Rhea" id="RHEA-COMP:10622"/>
        <dbReference type="Rhea" id="RHEA-COMP:10623"/>
        <dbReference type="ChEBI" id="CHEBI:15377"/>
        <dbReference type="ChEBI" id="CHEBI:15378"/>
        <dbReference type="ChEBI" id="CHEBI:57618"/>
        <dbReference type="ChEBI" id="CHEBI:58210"/>
        <dbReference type="ChEBI" id="CHEBI:58483"/>
        <dbReference type="ChEBI" id="CHEBI:128753"/>
        <dbReference type="EC" id="1.17.7.3"/>
    </reaction>
</comment>
<comment type="cofactor">
    <cofactor evidence="1">
        <name>[4Fe-4S] cluster</name>
        <dbReference type="ChEBI" id="CHEBI:49883"/>
    </cofactor>
    <text evidence="1">Binds 1 [4Fe-4S] cluster.</text>
</comment>
<comment type="pathway">
    <text evidence="1">Isoprenoid biosynthesis; isopentenyl diphosphate biosynthesis via DXP pathway; isopentenyl diphosphate from 1-deoxy-D-xylulose 5-phosphate: step 5/6.</text>
</comment>
<comment type="similarity">
    <text evidence="1">Belongs to the IspG family.</text>
</comment>
<accession>Q1C5I8</accession>
<dbReference type="EC" id="1.17.7.3" evidence="1"/>
<dbReference type="EMBL" id="CP000308">
    <property type="protein sequence ID" value="ABG14284.1"/>
    <property type="molecule type" value="Genomic_DNA"/>
</dbReference>
<dbReference type="RefSeq" id="WP_002209817.1">
    <property type="nucleotide sequence ID" value="NZ_CP009906.1"/>
</dbReference>
<dbReference type="SMR" id="Q1C5I8"/>
<dbReference type="GeneID" id="57975837"/>
<dbReference type="KEGG" id="ypa:YPA_2319"/>
<dbReference type="UniPathway" id="UPA00056">
    <property type="reaction ID" value="UER00096"/>
</dbReference>
<dbReference type="Proteomes" id="UP000001971">
    <property type="component" value="Chromosome"/>
</dbReference>
<dbReference type="GO" id="GO:0051539">
    <property type="term" value="F:4 iron, 4 sulfur cluster binding"/>
    <property type="evidence" value="ECO:0007669"/>
    <property type="project" value="UniProtKB-UniRule"/>
</dbReference>
<dbReference type="GO" id="GO:0046429">
    <property type="term" value="F:4-hydroxy-3-methylbut-2-en-1-yl diphosphate synthase activity (ferredoxin)"/>
    <property type="evidence" value="ECO:0007669"/>
    <property type="project" value="UniProtKB-UniRule"/>
</dbReference>
<dbReference type="GO" id="GO:0141197">
    <property type="term" value="F:4-hydroxy-3-methylbut-2-enyl-diphosphate synthase activity (flavodoxin)"/>
    <property type="evidence" value="ECO:0007669"/>
    <property type="project" value="UniProtKB-EC"/>
</dbReference>
<dbReference type="GO" id="GO:0005506">
    <property type="term" value="F:iron ion binding"/>
    <property type="evidence" value="ECO:0007669"/>
    <property type="project" value="InterPro"/>
</dbReference>
<dbReference type="GO" id="GO:0019288">
    <property type="term" value="P:isopentenyl diphosphate biosynthetic process, methylerythritol 4-phosphate pathway"/>
    <property type="evidence" value="ECO:0007669"/>
    <property type="project" value="UniProtKB-UniRule"/>
</dbReference>
<dbReference type="GO" id="GO:0016114">
    <property type="term" value="P:terpenoid biosynthetic process"/>
    <property type="evidence" value="ECO:0007669"/>
    <property type="project" value="InterPro"/>
</dbReference>
<dbReference type="FunFam" id="3.20.20.20:FF:000001">
    <property type="entry name" value="4-hydroxy-3-methylbut-2-en-1-yl diphosphate synthase (flavodoxin)"/>
    <property type="match status" value="1"/>
</dbReference>
<dbReference type="FunFam" id="3.30.413.10:FF:000002">
    <property type="entry name" value="4-hydroxy-3-methylbut-2-en-1-yl diphosphate synthase (flavodoxin)"/>
    <property type="match status" value="1"/>
</dbReference>
<dbReference type="Gene3D" id="3.20.20.20">
    <property type="entry name" value="Dihydropteroate synthase-like"/>
    <property type="match status" value="1"/>
</dbReference>
<dbReference type="Gene3D" id="3.30.413.10">
    <property type="entry name" value="Sulfite Reductase Hemoprotein, domain 1"/>
    <property type="match status" value="1"/>
</dbReference>
<dbReference type="HAMAP" id="MF_00159">
    <property type="entry name" value="IspG"/>
    <property type="match status" value="1"/>
</dbReference>
<dbReference type="InterPro" id="IPR011005">
    <property type="entry name" value="Dihydropteroate_synth-like_sf"/>
</dbReference>
<dbReference type="InterPro" id="IPR036849">
    <property type="entry name" value="Enolase-like_C_sf"/>
</dbReference>
<dbReference type="InterPro" id="IPR016425">
    <property type="entry name" value="IspG_bac"/>
</dbReference>
<dbReference type="InterPro" id="IPR004588">
    <property type="entry name" value="IspG_bac-typ"/>
</dbReference>
<dbReference type="InterPro" id="IPR045854">
    <property type="entry name" value="NO2/SO3_Rdtase_4Fe4S_sf"/>
</dbReference>
<dbReference type="NCBIfam" id="TIGR00612">
    <property type="entry name" value="ispG_gcpE"/>
    <property type="match status" value="1"/>
</dbReference>
<dbReference type="NCBIfam" id="NF001540">
    <property type="entry name" value="PRK00366.1"/>
    <property type="match status" value="1"/>
</dbReference>
<dbReference type="PANTHER" id="PTHR30454">
    <property type="entry name" value="4-HYDROXY-3-METHYLBUT-2-EN-1-YL DIPHOSPHATE SYNTHASE"/>
    <property type="match status" value="1"/>
</dbReference>
<dbReference type="PANTHER" id="PTHR30454:SF0">
    <property type="entry name" value="4-HYDROXY-3-METHYLBUT-2-EN-1-YL DIPHOSPHATE SYNTHASE (FERREDOXIN), CHLOROPLASTIC"/>
    <property type="match status" value="1"/>
</dbReference>
<dbReference type="Pfam" id="PF04551">
    <property type="entry name" value="GcpE"/>
    <property type="match status" value="1"/>
</dbReference>
<dbReference type="PIRSF" id="PIRSF004640">
    <property type="entry name" value="IspG"/>
    <property type="match status" value="1"/>
</dbReference>
<dbReference type="SUPFAM" id="SSF51604">
    <property type="entry name" value="Enolase C-terminal domain-like"/>
    <property type="match status" value="1"/>
</dbReference>
<dbReference type="SUPFAM" id="SSF56014">
    <property type="entry name" value="Nitrite and sulphite reductase 4Fe-4S domain-like"/>
    <property type="match status" value="1"/>
</dbReference>
<organism>
    <name type="scientific">Yersinia pestis bv. Antiqua (strain Antiqua)</name>
    <dbReference type="NCBI Taxonomy" id="360102"/>
    <lineage>
        <taxon>Bacteria</taxon>
        <taxon>Pseudomonadati</taxon>
        <taxon>Pseudomonadota</taxon>
        <taxon>Gammaproteobacteria</taxon>
        <taxon>Enterobacterales</taxon>
        <taxon>Yersiniaceae</taxon>
        <taxon>Yersinia</taxon>
    </lineage>
</organism>
<name>ISPG_YERPA</name>
<proteinExistence type="inferred from homology"/>